<gene>
    <name type="primary">AMACR</name>
</gene>
<feature type="chain" id="PRO_0000194705" description="Alpha-methylacyl-CoA racemase">
    <location>
        <begin position="1"/>
        <end position="382"/>
    </location>
</feature>
<feature type="short sequence motif" description="Microbody targeting signal" evidence="4">
    <location>
        <begin position="380"/>
        <end position="382"/>
    </location>
</feature>
<feature type="active site" description="Proton acceptor" evidence="1">
    <location>
        <position position="122"/>
    </location>
</feature>
<feature type="active site" description="Proton donor" evidence="1">
    <location>
        <position position="152"/>
    </location>
</feature>
<feature type="binding site" evidence="1">
    <location>
        <position position="36"/>
    </location>
    <ligand>
        <name>substrate</name>
    </ligand>
</feature>
<feature type="binding site" evidence="1">
    <location>
        <begin position="55"/>
        <end position="58"/>
    </location>
    <ligand>
        <name>substrate</name>
    </ligand>
</feature>
<feature type="binding site" evidence="1">
    <location>
        <begin position="121"/>
        <end position="126"/>
    </location>
    <ligand>
        <name>substrate</name>
    </ligand>
</feature>
<feature type="modified residue" description="N6-acetyllysine" evidence="2">
    <location>
        <position position="58"/>
    </location>
</feature>
<feature type="modified residue" description="N6-acetyllysine; alternate" evidence="2">
    <location>
        <position position="87"/>
    </location>
</feature>
<feature type="modified residue" description="N6-succinyllysine; alternate" evidence="2">
    <location>
        <position position="87"/>
    </location>
</feature>
<feature type="modified residue" description="N6-succinyllysine" evidence="2">
    <location>
        <position position="268"/>
    </location>
</feature>
<feature type="splice variant" id="VSP_037321" description="In isoform 2." evidence="17">
    <original>VLSKIGRSGENPYAPLNLLADFAGGGLMCALGIIMALFDRTRTGKGQVIDANMVEGTAYLSSFLWKTQKLSLWEAPRGQNMLDGGAPFYTTYRTADGE</original>
    <variation>GRNSIFKFFSVENSEIESVGSTSRTEHVGWWSTFLYDLQDSRWGIHGCWSNRTPVLRAADQRSLIPYFNLYLQFLNISMQNLFKVHTLLRPCYFLGQK</variation>
    <location>
        <begin position="132"/>
        <end position="229"/>
    </location>
</feature>
<feature type="splice variant" id="VSP_037323" description="In isoform 3." evidence="15 18">
    <original>VLSKIGRSGENPYAPLNLLADFAGGGLMCALGIIMALFDRTRTGKGQVIDANMVEGTAYLSSFLWKT</original>
    <variation>GRNSIFKFFSVENSEIESVGSTSRTEHVGWWSTFLYDLQDSRWGIHGCWSNRTPVLRAADQRTWTKV</variation>
    <location>
        <begin position="132"/>
        <end position="198"/>
    </location>
</feature>
<feature type="splice variant" id="VSP_037324" description="In isoform 3." evidence="15 18">
    <location>
        <begin position="199"/>
        <end position="382"/>
    </location>
</feature>
<feature type="splice variant" id="VSP_037326" description="In isoform 2." evidence="17">
    <location>
        <begin position="230"/>
        <end position="382"/>
    </location>
</feature>
<feature type="splice variant" id="VSP_044875" description="In isoform 4." evidence="16">
    <original>VKASL</original>
    <variation>AGSKFWILYPTHSNIQK</variation>
    <location>
        <begin position="378"/>
        <end position="382"/>
    </location>
</feature>
<feature type="sequence variant" id="VAR_010660" description="In dbSNP:rs3195676." evidence="7 10 11 12 13">
    <original>V</original>
    <variation>M</variation>
    <location>
        <position position="9"/>
    </location>
</feature>
<feature type="sequence variant" id="VAR_010661" description="In AMACRD and CBAS4; inactive enzyme; dbSNP:rs121917814." evidence="3 6">
    <original>S</original>
    <variation>P</variation>
    <location>
        <position position="52"/>
    </location>
</feature>
<feature type="sequence variant" id="VAR_010665" description="In CBAS4; inactive enzyme; dbSNP:rs121917816." evidence="3">
    <original>L</original>
    <variation>P</variation>
    <location>
        <position position="107"/>
    </location>
</feature>
<feature type="sequence variant" id="VAR_055616" description="In dbSNP:rs16892150.">
    <original>R</original>
    <variation>Q</variation>
    <location>
        <position position="118"/>
    </location>
</feature>
<feature type="sequence variant" id="VAR_010662" description="In dbSNP:rs10941112." evidence="4 10">
    <original>G</original>
    <variation>D</variation>
    <location>
        <position position="175"/>
    </location>
</feature>
<feature type="sequence variant" id="VAR_010663" description="In dbSNP:rs2287939." evidence="3 4 8 10">
    <original>L</original>
    <variation>S</variation>
    <location>
        <position position="201"/>
    </location>
</feature>
<feature type="sequence variant" id="VAR_055617" description="In dbSNP:rs9282594.">
    <original>P</original>
    <variation>S</variation>
    <location>
        <position position="238"/>
    </location>
</feature>
<feature type="sequence variant" id="VAR_055618" description="In dbSNP:rs34677.">
    <original>Q</original>
    <variation>H</variation>
    <location>
        <position position="239"/>
    </location>
</feature>
<feature type="sequence variant" id="VAR_055619" description="In dbSNP:rs9282593.">
    <original>M</original>
    <variation>I</variation>
    <location>
        <position position="261"/>
    </location>
</feature>
<feature type="sequence variant" id="VAR_055620" description="In dbSNP:rs3195678." evidence="4 10">
    <original>M</original>
    <variation>T</variation>
    <location>
        <position position="261"/>
    </location>
</feature>
<feature type="sequence variant" id="VAR_010664" description="In dbSNP:rs2278008." evidence="3 4 8 10">
    <original>E</original>
    <variation>K</variation>
    <location>
        <position position="277"/>
    </location>
</feature>
<feature type="sequence conflict" description="In Ref. 1; CAB44062." evidence="19" ref="1">
    <original>P</original>
    <variation>R</variation>
    <location>
        <position position="18"/>
    </location>
</feature>
<feature type="sequence conflict" description="In Ref. 7; ABQ59031." evidence="19" ref="7">
    <original>A</original>
    <variation>T</variation>
    <location>
        <position position="128"/>
    </location>
</feature>
<feature type="sequence conflict" description="In Ref. 1; CAB44062." evidence="19" ref="1">
    <original>L</original>
    <variation>V</variation>
    <location>
        <position position="150"/>
    </location>
</feature>
<feature type="sequence conflict" description="In Ref. 4; AAD10205." evidence="19" ref="4">
    <original>N</original>
    <variation>D</variation>
    <location>
        <position position="183"/>
    </location>
</feature>
<feature type="sequence conflict" description="In Ref. 4; AAD10205." evidence="19" ref="4">
    <original>N</original>
    <variation>S</variation>
    <location>
        <position position="257"/>
    </location>
</feature>
<feature type="sequence conflict" description="In Ref. 1; CAB44062." evidence="19" ref="1">
    <original>P</original>
    <variation>L</variation>
    <location>
        <position position="327"/>
    </location>
</feature>
<feature type="sequence conflict" description="In Ref. 1; CAB44062." evidence="19" ref="1">
    <original>FKR</original>
    <variation>SKG</variation>
    <location>
        <begin position="340"/>
        <end position="342"/>
    </location>
</feature>
<proteinExistence type="evidence at protein level"/>
<accession>Q9UHK6</accession>
<accession>A5YM47</accession>
<accession>B8Y916</accession>
<accession>B8Y918</accession>
<accession>F8W9N1</accession>
<accession>O43673</accession>
<accession>Q3KT79</accession>
<accession>Q96GH1</accession>
<accession>Q9Y3Q1</accession>
<name>AMACR_HUMAN</name>
<evidence type="ECO:0000250" key="1">
    <source>
        <dbReference type="UniProtKB" id="O06543"/>
    </source>
</evidence>
<evidence type="ECO:0000250" key="2">
    <source>
        <dbReference type="UniProtKB" id="O09174"/>
    </source>
</evidence>
<evidence type="ECO:0000269" key="3">
    <source>
    </source>
</evidence>
<evidence type="ECO:0000269" key="4">
    <source>
    </source>
</evidence>
<evidence type="ECO:0000269" key="5">
    <source>
    </source>
</evidence>
<evidence type="ECO:0000269" key="6">
    <source>
    </source>
</evidence>
<evidence type="ECO:0000269" key="7">
    <source>
    </source>
</evidence>
<evidence type="ECO:0000269" key="8">
    <source>
    </source>
</evidence>
<evidence type="ECO:0000269" key="9">
    <source>
    </source>
</evidence>
<evidence type="ECO:0000269" key="10">
    <source ref="4"/>
</evidence>
<evidence type="ECO:0000269" key="11">
    <source ref="5"/>
</evidence>
<evidence type="ECO:0000269" key="12">
    <source ref="6"/>
</evidence>
<evidence type="ECO:0000269" key="13">
    <source ref="9"/>
</evidence>
<evidence type="ECO:0000303" key="14">
    <source>
    </source>
</evidence>
<evidence type="ECO:0000303" key="15">
    <source>
    </source>
</evidence>
<evidence type="ECO:0000303" key="16">
    <source>
    </source>
</evidence>
<evidence type="ECO:0000303" key="17">
    <source ref="5"/>
</evidence>
<evidence type="ECO:0000303" key="18">
    <source ref="6"/>
</evidence>
<evidence type="ECO:0000305" key="19"/>
<evidence type="ECO:0000305" key="20">
    <source>
    </source>
</evidence>
<evidence type="ECO:0000305" key="21">
    <source>
    </source>
</evidence>
<evidence type="ECO:0000305" key="22">
    <source>
    </source>
</evidence>
<organism>
    <name type="scientific">Homo sapiens</name>
    <name type="common">Human</name>
    <dbReference type="NCBI Taxonomy" id="9606"/>
    <lineage>
        <taxon>Eukaryota</taxon>
        <taxon>Metazoa</taxon>
        <taxon>Chordata</taxon>
        <taxon>Craniata</taxon>
        <taxon>Vertebrata</taxon>
        <taxon>Euteleostomi</taxon>
        <taxon>Mammalia</taxon>
        <taxon>Eutheria</taxon>
        <taxon>Euarchontoglires</taxon>
        <taxon>Primates</taxon>
        <taxon>Haplorrhini</taxon>
        <taxon>Catarrhini</taxon>
        <taxon>Hominidae</taxon>
        <taxon>Homo</taxon>
    </lineage>
</organism>
<protein>
    <recommendedName>
        <fullName>Alpha-methylacyl-CoA racemase</fullName>
        <ecNumber evidence="9">5.1.99.4</ecNumber>
    </recommendedName>
    <alternativeName>
        <fullName evidence="14">2-methylacyl-CoA racemase</fullName>
    </alternativeName>
</protein>
<dbReference type="EC" id="5.1.99.4" evidence="9"/>
<dbReference type="EMBL" id="AJ130733">
    <property type="protein sequence ID" value="CAB44062.1"/>
    <property type="status" value="ALT_FRAME"/>
    <property type="molecule type" value="mRNA"/>
</dbReference>
<dbReference type="EMBL" id="AF158378">
    <property type="protein sequence ID" value="AAF22610.1"/>
    <property type="molecule type" value="mRNA"/>
</dbReference>
<dbReference type="EMBL" id="AY935981">
    <property type="protein sequence ID" value="AAY16192.1"/>
    <property type="molecule type" value="mRNA"/>
</dbReference>
<dbReference type="EMBL" id="AF047020">
    <property type="protein sequence ID" value="AAD10205.1"/>
    <property type="molecule type" value="mRNA"/>
</dbReference>
<dbReference type="EMBL" id="FJ498906">
    <property type="protein sequence ID" value="ACL67853.1"/>
    <property type="status" value="ALT_SEQ"/>
    <property type="molecule type" value="mRNA"/>
</dbReference>
<dbReference type="EMBL" id="FJ498907">
    <property type="protein sequence ID" value="ACL67854.1"/>
    <property type="status" value="ALT_SEQ"/>
    <property type="molecule type" value="mRNA"/>
</dbReference>
<dbReference type="EMBL" id="FJ498908">
    <property type="protein sequence ID" value="ACL67855.1"/>
    <property type="molecule type" value="mRNA"/>
</dbReference>
<dbReference type="EMBL" id="BT007193">
    <property type="protein sequence ID" value="AAP35857.1"/>
    <property type="molecule type" value="mRNA"/>
</dbReference>
<dbReference type="EMBL" id="EF560721">
    <property type="protein sequence ID" value="ABQ59031.1"/>
    <property type="molecule type" value="mRNA"/>
</dbReference>
<dbReference type="EMBL" id="AC139783">
    <property type="status" value="NOT_ANNOTATED_CDS"/>
    <property type="molecule type" value="Genomic_DNA"/>
</dbReference>
<dbReference type="EMBL" id="CH471118">
    <property type="protein sequence ID" value="EAX10816.1"/>
    <property type="molecule type" value="Genomic_DNA"/>
</dbReference>
<dbReference type="EMBL" id="BC009471">
    <property type="protein sequence ID" value="AAH09471.1"/>
    <property type="molecule type" value="mRNA"/>
</dbReference>
<dbReference type="CCDS" id="CCDS3902.1">
    <molecule id="Q9UHK6-1"/>
</dbReference>
<dbReference type="CCDS" id="CCDS3903.1">
    <molecule id="Q9UHK6-4"/>
</dbReference>
<dbReference type="CCDS" id="CCDS54836.1">
    <molecule id="Q9UHK6-5"/>
</dbReference>
<dbReference type="RefSeq" id="NP_001161067.1">
    <molecule id="Q9UHK6-5"/>
    <property type="nucleotide sequence ID" value="NM_001167595.2"/>
</dbReference>
<dbReference type="RefSeq" id="NP_055139.4">
    <molecule id="Q9UHK6-1"/>
    <property type="nucleotide sequence ID" value="NM_014324.5"/>
</dbReference>
<dbReference type="RefSeq" id="NP_976316.1">
    <molecule id="Q9UHK6-4"/>
    <property type="nucleotide sequence ID" value="NM_203382.3"/>
</dbReference>
<dbReference type="SMR" id="Q9UHK6"/>
<dbReference type="BioGRID" id="117134">
    <property type="interactions" value="76"/>
</dbReference>
<dbReference type="ELM" id="Q9UHK6"/>
<dbReference type="FunCoup" id="Q9UHK6">
    <property type="interactions" value="1201"/>
</dbReference>
<dbReference type="IntAct" id="Q9UHK6">
    <property type="interactions" value="64"/>
</dbReference>
<dbReference type="STRING" id="9606.ENSP00000371517"/>
<dbReference type="SwissLipids" id="SLP:000001289"/>
<dbReference type="iPTMnet" id="Q9UHK6"/>
<dbReference type="PhosphoSitePlus" id="Q9UHK6"/>
<dbReference type="SwissPalm" id="Q9UHK6"/>
<dbReference type="BioMuta" id="AMACR"/>
<dbReference type="DMDM" id="313104070"/>
<dbReference type="jPOST" id="Q9UHK6"/>
<dbReference type="MassIVE" id="Q9UHK6"/>
<dbReference type="PaxDb" id="9606-ENSP00000371517"/>
<dbReference type="PeptideAtlas" id="Q9UHK6"/>
<dbReference type="ProteomicsDB" id="30352"/>
<dbReference type="ProteomicsDB" id="84369">
    <molecule id="Q9UHK6-1"/>
</dbReference>
<dbReference type="ProteomicsDB" id="84370">
    <molecule id="Q9UHK6-2"/>
</dbReference>
<dbReference type="ProteomicsDB" id="84371">
    <molecule id="Q9UHK6-4"/>
</dbReference>
<dbReference type="Pumba" id="Q9UHK6"/>
<dbReference type="Antibodypedia" id="34888">
    <property type="antibodies" value="1109 antibodies from 44 providers"/>
</dbReference>
<dbReference type="DNASU" id="23600"/>
<dbReference type="Ensembl" id="ENST00000335606.11">
    <molecule id="Q9UHK6-1"/>
    <property type="protein sequence ID" value="ENSP00000334424.6"/>
    <property type="gene ID" value="ENSG00000242110.9"/>
</dbReference>
<dbReference type="Ensembl" id="ENST00000382072.6">
    <molecule id="Q9UHK6-4"/>
    <property type="protein sequence ID" value="ENSP00000371504.2"/>
    <property type="gene ID" value="ENSG00000242110.9"/>
</dbReference>
<dbReference type="Ensembl" id="ENST00000382085.7">
    <molecule id="Q9UHK6-5"/>
    <property type="protein sequence ID" value="ENSP00000371517.3"/>
    <property type="gene ID" value="ENSG00000242110.9"/>
</dbReference>
<dbReference type="Ensembl" id="ENST00000506639.5">
    <molecule id="Q9UHK6-2"/>
    <property type="protein sequence ID" value="ENSP00000427227.1"/>
    <property type="gene ID" value="ENSG00000242110.9"/>
</dbReference>
<dbReference type="GeneID" id="23600"/>
<dbReference type="KEGG" id="hsa:23600"/>
<dbReference type="MANE-Select" id="ENST00000335606.11">
    <property type="protein sequence ID" value="ENSP00000334424.6"/>
    <property type="RefSeq nucleotide sequence ID" value="NM_014324.6"/>
    <property type="RefSeq protein sequence ID" value="NP_055139.4"/>
</dbReference>
<dbReference type="UCSC" id="uc003jig.4">
    <molecule id="Q9UHK6-1"/>
    <property type="organism name" value="human"/>
</dbReference>
<dbReference type="AGR" id="HGNC:451"/>
<dbReference type="CTD" id="23600"/>
<dbReference type="DisGeNET" id="23600"/>
<dbReference type="GeneCards" id="AMACR"/>
<dbReference type="HGNC" id="HGNC:451">
    <property type="gene designation" value="AMACR"/>
</dbReference>
<dbReference type="HPA" id="ENSG00000242110">
    <property type="expression patterns" value="Tissue enhanced (kidney, liver)"/>
</dbReference>
<dbReference type="MalaCards" id="AMACR"/>
<dbReference type="MIM" id="214950">
    <property type="type" value="phenotype"/>
</dbReference>
<dbReference type="MIM" id="604489">
    <property type="type" value="gene"/>
</dbReference>
<dbReference type="MIM" id="614307">
    <property type="type" value="phenotype"/>
</dbReference>
<dbReference type="neXtProt" id="NX_Q9UHK6"/>
<dbReference type="OpenTargets" id="ENSG00000242110"/>
<dbReference type="Orphanet" id="79095">
    <property type="disease" value="Congenital bile acid synthesis defect type 4"/>
</dbReference>
<dbReference type="PharmGKB" id="PA24757"/>
<dbReference type="VEuPathDB" id="HostDB:ENSG00000242110"/>
<dbReference type="eggNOG" id="KOG3957">
    <property type="taxonomic scope" value="Eukaryota"/>
</dbReference>
<dbReference type="GeneTree" id="ENSGT00940000157215"/>
<dbReference type="HOGENOM" id="CLU_1209467_0_0_1"/>
<dbReference type="InParanoid" id="Q9UHK6"/>
<dbReference type="OMA" id="VVIDPFR"/>
<dbReference type="OrthoDB" id="16747at2759"/>
<dbReference type="PAN-GO" id="Q9UHK6">
    <property type="GO annotations" value="3 GO annotations based on evolutionary models"/>
</dbReference>
<dbReference type="PhylomeDB" id="Q9UHK6"/>
<dbReference type="TreeFam" id="TF314188"/>
<dbReference type="BioCyc" id="MetaCyc:HS01416-MONOMER"/>
<dbReference type="BRENDA" id="5.1.99.4">
    <property type="organism ID" value="2681"/>
</dbReference>
<dbReference type="PathwayCommons" id="Q9UHK6"/>
<dbReference type="Reactome" id="R-HSA-193368">
    <property type="pathway name" value="Synthesis of bile acids and bile salts via 7alpha-hydroxycholesterol"/>
</dbReference>
<dbReference type="Reactome" id="R-HSA-193775">
    <property type="pathway name" value="Synthesis of bile acids and bile salts via 24-hydroxycholesterol"/>
</dbReference>
<dbReference type="Reactome" id="R-HSA-389887">
    <property type="pathway name" value="Beta-oxidation of pristanoyl-CoA"/>
</dbReference>
<dbReference type="Reactome" id="R-HSA-9033241">
    <property type="pathway name" value="Peroxisomal protein import"/>
</dbReference>
<dbReference type="SABIO-RK" id="Q9UHK6"/>
<dbReference type="SignaLink" id="Q9UHK6"/>
<dbReference type="UniPathway" id="UPA00199"/>
<dbReference type="UniPathway" id="UPA00221"/>
<dbReference type="BioGRID-ORCS" id="23600">
    <property type="hits" value="14 hits in 1161 CRISPR screens"/>
</dbReference>
<dbReference type="GeneWiki" id="Alpha-methylacyl-CoA_racemase"/>
<dbReference type="GenomeRNAi" id="23600"/>
<dbReference type="Pharos" id="Q9UHK6">
    <property type="development level" value="Tbio"/>
</dbReference>
<dbReference type="PRO" id="PR:Q9UHK6"/>
<dbReference type="Proteomes" id="UP000005640">
    <property type="component" value="Chromosome 5"/>
</dbReference>
<dbReference type="RNAct" id="Q9UHK6">
    <property type="molecule type" value="protein"/>
</dbReference>
<dbReference type="Bgee" id="ENSG00000242110">
    <property type="expression patterns" value="Expressed in adult mammalian kidney and 107 other cell types or tissues"/>
</dbReference>
<dbReference type="ExpressionAtlas" id="Q9UHK6">
    <property type="expression patterns" value="baseline and differential"/>
</dbReference>
<dbReference type="GO" id="GO:0005737">
    <property type="term" value="C:cytoplasm"/>
    <property type="evidence" value="ECO:0000314"/>
    <property type="project" value="UniProtKB"/>
</dbReference>
<dbReference type="GO" id="GO:0005829">
    <property type="term" value="C:cytosol"/>
    <property type="evidence" value="ECO:0000304"/>
    <property type="project" value="Reactome"/>
</dbReference>
<dbReference type="GO" id="GO:0043231">
    <property type="term" value="C:intracellular membrane-bounded organelle"/>
    <property type="evidence" value="ECO:0000314"/>
    <property type="project" value="HPA"/>
</dbReference>
<dbReference type="GO" id="GO:0005739">
    <property type="term" value="C:mitochondrion"/>
    <property type="evidence" value="ECO:0000314"/>
    <property type="project" value="UniProtKB"/>
</dbReference>
<dbReference type="GO" id="GO:0005782">
    <property type="term" value="C:peroxisomal matrix"/>
    <property type="evidence" value="ECO:0000304"/>
    <property type="project" value="Reactome"/>
</dbReference>
<dbReference type="GO" id="GO:0005777">
    <property type="term" value="C:peroxisome"/>
    <property type="evidence" value="ECO:0000314"/>
    <property type="project" value="UniProtKB"/>
</dbReference>
<dbReference type="GO" id="GO:0005886">
    <property type="term" value="C:plasma membrane"/>
    <property type="evidence" value="ECO:0000314"/>
    <property type="project" value="HPA"/>
</dbReference>
<dbReference type="GO" id="GO:0008111">
    <property type="term" value="F:alpha-methylacyl-CoA racemase activity"/>
    <property type="evidence" value="ECO:0000314"/>
    <property type="project" value="UniProtKB"/>
</dbReference>
<dbReference type="GO" id="GO:0005102">
    <property type="term" value="F:signaling receptor binding"/>
    <property type="evidence" value="ECO:0000353"/>
    <property type="project" value="UniProtKB"/>
</dbReference>
<dbReference type="GO" id="GO:0006699">
    <property type="term" value="P:bile acid biosynthetic process"/>
    <property type="evidence" value="ECO:0000304"/>
    <property type="project" value="Reactome"/>
</dbReference>
<dbReference type="GO" id="GO:0008206">
    <property type="term" value="P:bile acid metabolic process"/>
    <property type="evidence" value="ECO:0000314"/>
    <property type="project" value="UniProtKB"/>
</dbReference>
<dbReference type="GO" id="GO:0033540">
    <property type="term" value="P:fatty acid beta-oxidation using acyl-CoA oxidase"/>
    <property type="evidence" value="ECO:0000304"/>
    <property type="project" value="Reactome"/>
</dbReference>
<dbReference type="FunFam" id="3.30.1540.10:FF:000004">
    <property type="entry name" value="Probable alpha-methylacyl-CoA racemase mcr"/>
    <property type="match status" value="1"/>
</dbReference>
<dbReference type="FunFam" id="3.40.50.10540:FF:000004">
    <property type="entry name" value="Probable alpha-methylacyl-CoA racemase mcr"/>
    <property type="match status" value="1"/>
</dbReference>
<dbReference type="Gene3D" id="3.40.50.10540">
    <property type="entry name" value="Crotonobetainyl-coa:carnitine coa-transferase, domain 1"/>
    <property type="match status" value="1"/>
</dbReference>
<dbReference type="Gene3D" id="3.30.1540.10">
    <property type="entry name" value="formyl-coa transferase, domain 3"/>
    <property type="match status" value="1"/>
</dbReference>
<dbReference type="InterPro" id="IPR050509">
    <property type="entry name" value="CoA-transferase_III"/>
</dbReference>
<dbReference type="InterPro" id="IPR003673">
    <property type="entry name" value="CoA-Trfase_fam_III"/>
</dbReference>
<dbReference type="InterPro" id="IPR044855">
    <property type="entry name" value="CoA-Trfase_III_dom3_sf"/>
</dbReference>
<dbReference type="InterPro" id="IPR023606">
    <property type="entry name" value="CoA-Trfase_III_dom_1_sf"/>
</dbReference>
<dbReference type="PANTHER" id="PTHR48228:SF5">
    <property type="entry name" value="ALPHA-METHYLACYL-COA RACEMASE"/>
    <property type="match status" value="1"/>
</dbReference>
<dbReference type="PANTHER" id="PTHR48228">
    <property type="entry name" value="SUCCINYL-COA--D-CITRAMALATE COA-TRANSFERASE"/>
    <property type="match status" value="1"/>
</dbReference>
<dbReference type="Pfam" id="PF02515">
    <property type="entry name" value="CoA_transf_3"/>
    <property type="match status" value="1"/>
</dbReference>
<dbReference type="SUPFAM" id="SSF89796">
    <property type="entry name" value="CoA-transferase family III (CaiB/BaiF)"/>
    <property type="match status" value="1"/>
</dbReference>
<reference key="1">
    <citation type="journal article" date="2000" name="J. Lipid Res.">
        <title>Mitochondrial and peroxisomal targeting of 2-methylacyl-CoA racemase in humans.</title>
        <authorList>
            <person name="Amery L."/>
            <person name="Fransen M."/>
            <person name="De Nys K."/>
            <person name="Mannaerts G.P."/>
            <person name="Van Veldhoven P.P."/>
        </authorList>
    </citation>
    <scope>NUCLEOTIDE SEQUENCE [MRNA] (ISOFORM 1)</scope>
    <scope>VARIANTS ASP-175; SER-201; THR-261 AND LYS-277</scope>
    <scope>SUBCELLULAR LOCATION</scope>
    <scope>MICROBODY TARGETING</scope>
</reference>
<reference key="2">
    <citation type="journal article" date="2000" name="Nat. Genet.">
        <title>Mutations in the gene encoding peroxisomal alpha-methylacyl-CoA racemase cause adult-onset sensory motor neuropathy.</title>
        <authorList>
            <person name="Ferdinandusse S."/>
            <person name="Denis S."/>
            <person name="Clayton P.T."/>
            <person name="Graham A."/>
            <person name="Rees J.E."/>
            <person name="Allen J.T."/>
            <person name="McLean B.N."/>
            <person name="Brown A.Y."/>
            <person name="Vreken P."/>
            <person name="Waterham H.R."/>
            <person name="Wanders R.J.A."/>
        </authorList>
    </citation>
    <scope>NUCLEOTIDE SEQUENCE [MRNA] (ISOFORM 1)</scope>
    <scope>FUNCTION</scope>
    <scope>CATALYTIC ACTIVITY</scope>
    <scope>VARIANT AMACRD PRO-52</scope>
    <scope>VARIANT CBAS4 PRO-107</scope>
    <scope>VARIANTS SER-201 AND LYS-277</scope>
    <scope>CHARACTERIZATION OF VARIANT AMACRD PRO-52</scope>
    <scope>CHARACTERIZATION OF VARIANT CBAS4 PRO-107</scope>
</reference>
<reference key="3">
    <citation type="journal article" date="2005" name="Prostate">
        <title>A variant of the alpha-methyl-acyl-CoA racemase gene created by a deletion in exon 5 and its expression in prostate cancer.</title>
        <authorList>
            <person name="Mubiru J.N."/>
            <person name="Valente A.J."/>
            <person name="Troyer D.A."/>
        </authorList>
    </citation>
    <scope>NUCLEOTIDE SEQUENCE [MRNA] (ISOFORM 4)</scope>
    <scope>VARIANTS SER-201 AND LYS-277</scope>
    <source>
        <tissue>Prostate cancer</tissue>
    </source>
</reference>
<reference key="4">
    <citation type="submission" date="1999-01" db="EMBL/GenBank/DDBJ databases">
        <title>Human alpha-methylacyl-CoA racemase cDNA sequence.</title>
        <authorList>
            <person name="Albers C."/>
            <person name="Schmitz W."/>
            <person name="Conzelmann E."/>
        </authorList>
    </citation>
    <scope>NUCLEOTIDE SEQUENCE [MRNA] (ISOFORM 1)</scope>
    <scope>VARIANTS MET-9; ASP-175; SER-201; THR-261 AND LYS-277</scope>
</reference>
<reference key="5">
    <citation type="submission" date="2008-11" db="EMBL/GenBank/DDBJ databases">
        <title>Expression of alpha-methylacyl-CoA racemase spliced variants in normal and malignant prostate tissue.</title>
        <authorList>
            <person name="Ouyang B."/>
            <person name="Leung Y.-K."/>
            <person name="Wang V."/>
            <person name="Chung E."/>
            <person name="Levin L."/>
            <person name="Bracken B."/>
            <person name="Cheng L."/>
            <person name="Ho S.-M."/>
        </authorList>
    </citation>
    <scope>NUCLEOTIDE SEQUENCE [MRNA] (ISOFORM 2)</scope>
    <scope>VARIANT MET-9</scope>
</reference>
<reference key="6">
    <citation type="submission" date="2003-05" db="EMBL/GenBank/DDBJ databases">
        <title>Cloning of human full-length CDSs in BD Creator(TM) system donor vector.</title>
        <authorList>
            <person name="Kalnine N."/>
            <person name="Chen X."/>
            <person name="Rolfs A."/>
            <person name="Halleck A."/>
            <person name="Hines L."/>
            <person name="Eisenstein S."/>
            <person name="Koundinya M."/>
            <person name="Raphael J."/>
            <person name="Moreira D."/>
            <person name="Kelley T."/>
            <person name="LaBaer J."/>
            <person name="Lin Y."/>
            <person name="Phelan M."/>
            <person name="Farmer A."/>
        </authorList>
    </citation>
    <scope>NUCLEOTIDE SEQUENCE [LARGE SCALE MRNA] (ISOFORM 3)</scope>
    <scope>VARIANT MET-9</scope>
</reference>
<reference key="7">
    <citation type="journal article" date="2007" name="BMC Genomics">
        <title>The full-ORF clone resource of the German cDNA consortium.</title>
        <authorList>
            <person name="Bechtel S."/>
            <person name="Rosenfelder H."/>
            <person name="Duda A."/>
            <person name="Schmidt C.P."/>
            <person name="Ernst U."/>
            <person name="Wellenreuther R."/>
            <person name="Mehrle A."/>
            <person name="Schuster C."/>
            <person name="Bahr A."/>
            <person name="Bloecker H."/>
            <person name="Heubner D."/>
            <person name="Hoerlein A."/>
            <person name="Michel G."/>
            <person name="Wedler H."/>
            <person name="Koehrer K."/>
            <person name="Ottenwaelder B."/>
            <person name="Poustka A."/>
            <person name="Wiemann S."/>
            <person name="Schupp I."/>
        </authorList>
    </citation>
    <scope>NUCLEOTIDE SEQUENCE [LARGE SCALE MRNA] (ISOFORM 1)</scope>
    <source>
        <tissue>Salivary gland</tissue>
    </source>
</reference>
<reference key="8">
    <citation type="journal article" date="2004" name="Nature">
        <title>The DNA sequence and comparative analysis of human chromosome 5.</title>
        <authorList>
            <person name="Schmutz J."/>
            <person name="Martin J."/>
            <person name="Terry A."/>
            <person name="Couronne O."/>
            <person name="Grimwood J."/>
            <person name="Lowry S."/>
            <person name="Gordon L.A."/>
            <person name="Scott D."/>
            <person name="Xie G."/>
            <person name="Huang W."/>
            <person name="Hellsten U."/>
            <person name="Tran-Gyamfi M."/>
            <person name="She X."/>
            <person name="Prabhakar S."/>
            <person name="Aerts A."/>
            <person name="Altherr M."/>
            <person name="Bajorek E."/>
            <person name="Black S."/>
            <person name="Branscomb E."/>
            <person name="Caoile C."/>
            <person name="Challacombe J.F."/>
            <person name="Chan Y.M."/>
            <person name="Denys M."/>
            <person name="Detter J.C."/>
            <person name="Escobar J."/>
            <person name="Flowers D."/>
            <person name="Fotopulos D."/>
            <person name="Glavina T."/>
            <person name="Gomez M."/>
            <person name="Gonzales E."/>
            <person name="Goodstein D."/>
            <person name="Grigoriev I."/>
            <person name="Groza M."/>
            <person name="Hammon N."/>
            <person name="Hawkins T."/>
            <person name="Haydu L."/>
            <person name="Israni S."/>
            <person name="Jett J."/>
            <person name="Kadner K."/>
            <person name="Kimball H."/>
            <person name="Kobayashi A."/>
            <person name="Lopez F."/>
            <person name="Lou Y."/>
            <person name="Martinez D."/>
            <person name="Medina C."/>
            <person name="Morgan J."/>
            <person name="Nandkeshwar R."/>
            <person name="Noonan J.P."/>
            <person name="Pitluck S."/>
            <person name="Pollard M."/>
            <person name="Predki P."/>
            <person name="Priest J."/>
            <person name="Ramirez L."/>
            <person name="Retterer J."/>
            <person name="Rodriguez A."/>
            <person name="Rogers S."/>
            <person name="Salamov A."/>
            <person name="Salazar A."/>
            <person name="Thayer N."/>
            <person name="Tice H."/>
            <person name="Tsai M."/>
            <person name="Ustaszewska A."/>
            <person name="Vo N."/>
            <person name="Wheeler J."/>
            <person name="Wu K."/>
            <person name="Yang J."/>
            <person name="Dickson M."/>
            <person name="Cheng J.-F."/>
            <person name="Eichler E.E."/>
            <person name="Olsen A."/>
            <person name="Pennacchio L.A."/>
            <person name="Rokhsar D.S."/>
            <person name="Richardson P."/>
            <person name="Lucas S.M."/>
            <person name="Myers R.M."/>
            <person name="Rubin E.M."/>
        </authorList>
    </citation>
    <scope>NUCLEOTIDE SEQUENCE [LARGE SCALE GENOMIC DNA]</scope>
</reference>
<reference key="9">
    <citation type="submission" date="2005-07" db="EMBL/GenBank/DDBJ databases">
        <authorList>
            <person name="Mural R.J."/>
            <person name="Istrail S."/>
            <person name="Sutton G.G."/>
            <person name="Florea L."/>
            <person name="Halpern A.L."/>
            <person name="Mobarry C.M."/>
            <person name="Lippert R."/>
            <person name="Walenz B."/>
            <person name="Shatkay H."/>
            <person name="Dew I."/>
            <person name="Miller J.R."/>
            <person name="Flanigan M.J."/>
            <person name="Edwards N.J."/>
            <person name="Bolanos R."/>
            <person name="Fasulo D."/>
            <person name="Halldorsson B.V."/>
            <person name="Hannenhalli S."/>
            <person name="Turner R."/>
            <person name="Yooseph S."/>
            <person name="Lu F."/>
            <person name="Nusskern D.R."/>
            <person name="Shue B.C."/>
            <person name="Zheng X.H."/>
            <person name="Zhong F."/>
            <person name="Delcher A.L."/>
            <person name="Huson D.H."/>
            <person name="Kravitz S.A."/>
            <person name="Mouchard L."/>
            <person name="Reinert K."/>
            <person name="Remington K.A."/>
            <person name="Clark A.G."/>
            <person name="Waterman M.S."/>
            <person name="Eichler E.E."/>
            <person name="Adams M.D."/>
            <person name="Hunkapiller M.W."/>
            <person name="Myers E.W."/>
            <person name="Venter J.C."/>
        </authorList>
    </citation>
    <scope>NUCLEOTIDE SEQUENCE [LARGE SCALE GENOMIC DNA]</scope>
    <scope>VARIANT MET-9</scope>
</reference>
<reference key="10">
    <citation type="journal article" date="2004" name="Genome Res.">
        <title>The status, quality, and expansion of the NIH full-length cDNA project: the Mammalian Gene Collection (MGC).</title>
        <authorList>
            <consortium name="The MGC Project Team"/>
        </authorList>
    </citation>
    <scope>NUCLEOTIDE SEQUENCE [LARGE SCALE MRNA] (ISOFORM 3)</scope>
    <scope>VARIANT MET-9</scope>
    <source>
        <tissue>Kidney</tissue>
    </source>
</reference>
<reference key="11">
    <citation type="journal article" date="1995" name="Eur. J. Biochem.">
        <title>Purification and characterization of an alpha-methylacyl-CoA racemase from human liver.</title>
        <authorList>
            <person name="Schmitz W."/>
            <person name="Albers C."/>
            <person name="Fingerhut R."/>
            <person name="Conzelmann E."/>
        </authorList>
    </citation>
    <scope>FUNCTION</scope>
    <scope>CATALYTIC ACTIVITY</scope>
    <scope>SUBUNIT</scope>
    <scope>SUBCELLULAR LOCATION</scope>
    <scope>BIOPHYSICOCHEMICAL PROPERTIES</scope>
    <source>
        <tissue>Liver</tissue>
    </source>
</reference>
<reference key="12">
    <citation type="journal article" date="2000" name="J. Lipid Res.">
        <title>Subcellular localization and physiological role of alpha-methylacyl-CoA racemase.</title>
        <authorList>
            <person name="Ferdinandusse S."/>
            <person name="Denis S."/>
            <person name="Ijlst L."/>
            <person name="Dacremont G."/>
            <person name="Waterham H.R."/>
            <person name="Wanders R.J."/>
        </authorList>
    </citation>
    <scope>FUNCTION</scope>
    <scope>CATALYTIC ACTIVITY</scope>
    <scope>SUBCELLULAR LOCATION</scope>
</reference>
<reference key="13">
    <citation type="journal article" date="2014" name="J. Proteomics">
        <title>An enzyme assisted RP-RPLC approach for in-depth analysis of human liver phosphoproteome.</title>
        <authorList>
            <person name="Bian Y."/>
            <person name="Song C."/>
            <person name="Cheng K."/>
            <person name="Dong M."/>
            <person name="Wang F."/>
            <person name="Huang J."/>
            <person name="Sun D."/>
            <person name="Wang L."/>
            <person name="Ye M."/>
            <person name="Zou H."/>
        </authorList>
    </citation>
    <scope>IDENTIFICATION BY MASS SPECTROMETRY [LARGE SCALE ANALYSIS]</scope>
    <source>
        <tissue>Liver</tissue>
    </source>
</reference>
<reference key="14">
    <citation type="journal article" date="2015" name="Proteomics">
        <title>N-terminome analysis of the human mitochondrial proteome.</title>
        <authorList>
            <person name="Vaca Jacome A.S."/>
            <person name="Rabilloud T."/>
            <person name="Schaeffer-Reiss C."/>
            <person name="Rompais M."/>
            <person name="Ayoub D."/>
            <person name="Lane L."/>
            <person name="Bairoch A."/>
            <person name="Van Dorsselaer A."/>
            <person name="Carapito C."/>
        </authorList>
    </citation>
    <scope>IDENTIFICATION BY MASS SPECTROMETRY [LARGE SCALE ANALYSIS]</scope>
</reference>
<reference key="15">
    <citation type="journal article" date="2003" name="Gastroenterology">
        <title>Liver disease caused by failure to racemize trihydroxycholestanoic acid: gene mutation and effect of bile acid therapy.</title>
        <authorList>
            <person name="Setchell K.D.R."/>
            <person name="Heubi J.E."/>
            <person name="Bove K.E."/>
            <person name="O'Connell N.C."/>
            <person name="Brewsaugh T."/>
            <person name="Steinberg S.J."/>
            <person name="Moser A."/>
            <person name="Squires R.H. Jr."/>
        </authorList>
    </citation>
    <scope>VARIANT CBAS4 PRO-52</scope>
</reference>
<sequence length="382" mass="42387">MALQGISVVELSGLAPGPFCAMVLADFGARVVRVDRPGSRYDVSRLGRGKRSLVLDLKQPRGAAVLRRLCKRSDVLLEPFRRGVMEKLQLGPEILQRENPRLIYARLSGFGQSGSFCRLAGHDINYLALSGVLSKIGRSGENPYAPLNLLADFAGGGLMCALGIIMALFDRTRTGKGQVIDANMVEGTAYLSSFLWKTQKLSLWEAPRGQNMLDGGAPFYTTYRTADGEFMAVGAIEPQFYELLIKGLGLKSDELPNQMSMDDWPEMKKKFADVFAEKTKAEWCQIFDGTDACVTPVLTFEEVVHHDHNKERGSFITSEEQDVSPRPAPLLLNTPAIPSFKRDPFIGEHTEEILEEFGFSREEIYQLNSDKIIESNKVKASL</sequence>
<comment type="function">
    <text evidence="3 5 9">Catalyzes the interconversion of (R)- and (S)-stereoisomers of alpha-methyl-branched-chain fatty acyl-CoA esters (PubMed:10655068, PubMed:11060359, PubMed:7649182). Acts only on coenzyme A thioesters, not on free fatty acids, and accepts as substrates a wide range of alpha-methylacyl-CoAs, including pristanoyl-CoA, trihydroxycoprostanoyl-CoA (an intermediate in bile acid synthesis), and arylpropionic acids like the anti-inflammatory drug ibuprofen (2-(4-isobutylphenyl)propionic acid) but neither 3-methyl-branched nor linear-chain acyl-CoAs (PubMed:10655068, PubMed:11060359, PubMed:7649182).</text>
</comment>
<comment type="catalytic activity">
    <reaction evidence="9">
        <text>a (2S)-2-methylacyl-CoA = a (2R)-2-methylacyl-CoA</text>
        <dbReference type="Rhea" id="RHEA:12657"/>
        <dbReference type="ChEBI" id="CHEBI:57313"/>
        <dbReference type="ChEBI" id="CHEBI:57314"/>
        <dbReference type="EC" id="5.1.99.4"/>
    </reaction>
    <physiologicalReaction direction="left-to-right" evidence="22">
        <dbReference type="Rhea" id="RHEA:12658"/>
    </physiologicalReaction>
    <physiologicalReaction direction="right-to-left" evidence="22">
        <dbReference type="Rhea" id="RHEA:12659"/>
    </physiologicalReaction>
</comment>
<comment type="catalytic activity">
    <reaction evidence="3">
        <text>(25R)-3alpha,7alpha,12alpha-trihydroxy-5beta-cholestan-26-oyl-CoA = (25S)-3alpha,7alpha,12alpha-trihydroxy-5beta-cholestan-26-oyl-CoA</text>
        <dbReference type="Rhea" id="RHEA:40455"/>
        <dbReference type="ChEBI" id="CHEBI:58677"/>
        <dbReference type="ChEBI" id="CHEBI:77251"/>
    </reaction>
    <physiologicalReaction direction="left-to-right" evidence="20">
        <dbReference type="Rhea" id="RHEA:40456"/>
    </physiologicalReaction>
    <physiologicalReaction direction="right-to-left" evidence="20">
        <dbReference type="Rhea" id="RHEA:40457"/>
    </physiologicalReaction>
</comment>
<comment type="catalytic activity">
    <reaction evidence="5">
        <text>(2R,6)-dimethylheptanoyl-CoA = (2S,6)-dimethylheptanoyl-CoA</text>
        <dbReference type="Rhea" id="RHEA:46732"/>
        <dbReference type="ChEBI" id="CHEBI:86982"/>
        <dbReference type="ChEBI" id="CHEBI:86983"/>
    </reaction>
    <physiologicalReaction direction="left-to-right" evidence="21">
        <dbReference type="Rhea" id="RHEA:46733"/>
    </physiologicalReaction>
</comment>
<comment type="biophysicochemical properties">
    <kinetics>
        <KM evidence="9">172 uM for pristanoyl-CoA</KM>
        <KM evidence="9">31.6 uM for trihydroxycoprostanoyl-CoA</KM>
        <Vmax evidence="9">0.1 umol/min/mg enzyme for pristanoyl-CoA</Vmax>
        <Vmax evidence="9">0.3 umol/min/mg enzyme for trihydroxycoprostanoyl-CoA</Vmax>
    </kinetics>
    <phDependence>
        <text evidence="9">Optimum pH is 7-8.</text>
    </phDependence>
</comment>
<comment type="pathway">
    <text>Lipid metabolism; bile acid biosynthesis.</text>
</comment>
<comment type="pathway">
    <text>Lipid metabolism; fatty acid metabolism.</text>
</comment>
<comment type="subunit">
    <text evidence="9">Monomer.</text>
</comment>
<comment type="subcellular location">
    <subcellularLocation>
        <location evidence="4 5 9">Peroxisome</location>
    </subcellularLocation>
    <subcellularLocation>
        <location evidence="4 5 9">Mitochondrion</location>
    </subcellularLocation>
</comment>
<comment type="alternative products">
    <event type="alternative splicing"/>
    <isoform>
        <id>Q9UHK6-1</id>
        <name>1</name>
        <sequence type="displayed"/>
    </isoform>
    <isoform>
        <id>Q9UHK6-2</id>
        <name>2</name>
        <name>IBLi</name>
        <sequence type="described" ref="VSP_037321 VSP_037326"/>
    </isoform>
    <isoform>
        <id>Q9UHK6-4</id>
        <name>3</name>
        <sequence type="described" ref="VSP_037323 VSP_037324"/>
    </isoform>
    <isoform>
        <id>Q9UHK6-5</id>
        <name>4</name>
        <sequence type="described" ref="VSP_044875"/>
    </isoform>
</comment>
<comment type="disease" evidence="3">
    <disease id="DI-00076">
        <name>Alpha-methylacyl-CoA racemase deficiency</name>
        <acronym>AMACRD</acronym>
        <description>A rare autosomal recessive peroxisomal disorder characterized by elevated plasma concentrations of pristanic acid C27-bile-acid intermediates, and adult onset of variable neurodegenerative symptoms affecting the central and peripheral nervous systems. Features may include seizures, visual failure, sensorimotor neuropathy, spasticity, migraine, and white matter hyperintensities on brain imaging.</description>
        <dbReference type="MIM" id="614307"/>
    </disease>
    <text>The disease is caused by variants affecting the gene represented in this entry.</text>
</comment>
<comment type="disease" evidence="3 6">
    <disease id="DI-00332">
        <name>Congenital bile acid synthesis defect 4</name>
        <acronym>CBAS4</acronym>
        <description>A disorder characterized by the presence of trihydroxycoprostanic acid in the bile and absence of cholic acid. Patients manifest neonatal jaundice, intrahepatic cholestasis and bile duct deficiency.</description>
        <dbReference type="MIM" id="214950"/>
    </disease>
    <text>The disease is caused by variants affecting the gene represented in this entry.</text>
</comment>
<comment type="miscellaneous">
    <molecule>Isoform 2</molecule>
    <text evidence="19">May be produced at very low levels due to a premature stop codon in the mRNA, leading to nonsense-mediated mRNA decay.</text>
</comment>
<comment type="miscellaneous">
    <molecule>Isoform 4</molecule>
    <text evidence="19">Expression is elevated in prostate cancer.</text>
</comment>
<comment type="similarity">
    <text evidence="19">Belongs to the CoA-transferase III family.</text>
</comment>
<comment type="sequence caution" evidence="19">
    <conflict type="miscellaneous discrepancy">
        <sequence resource="EMBL-CDS" id="ACL67853"/>
    </conflict>
    <text>Aberrant splicing.</text>
</comment>
<comment type="sequence caution" evidence="19">
    <conflict type="miscellaneous discrepancy">
        <sequence resource="EMBL-CDS" id="ACL67854"/>
    </conflict>
    <text>Aberrant splicing.</text>
</comment>
<comment type="sequence caution" evidence="19">
    <conflict type="frameshift">
        <sequence resource="EMBL-CDS" id="CAB44062"/>
    </conflict>
</comment>
<keyword id="KW-0007">Acetylation</keyword>
<keyword id="KW-0025">Alternative splicing</keyword>
<keyword id="KW-0225">Disease variant</keyword>
<keyword id="KW-0988">Intrahepatic cholestasis</keyword>
<keyword id="KW-0413">Isomerase</keyword>
<keyword id="KW-0496">Mitochondrion</keyword>
<keyword id="KW-0576">Peroxisome</keyword>
<keyword id="KW-1267">Proteomics identification</keyword>
<keyword id="KW-1185">Reference proteome</keyword>